<proteinExistence type="inferred from homology"/>
<accession>A6VI47</accession>
<keyword id="KW-0687">Ribonucleoprotein</keyword>
<keyword id="KW-0689">Ribosomal protein</keyword>
<keyword id="KW-0694">RNA-binding</keyword>
<keyword id="KW-0699">rRNA-binding</keyword>
<comment type="subunit">
    <text evidence="1">Part of the 50S ribosomal subunit. Binds 23S rRNA.</text>
</comment>
<comment type="similarity">
    <text evidence="1">Belongs to the eukaryotic ribosomal protein eL20 family.</text>
</comment>
<protein>
    <recommendedName>
        <fullName evidence="1">Large ribosomal subunit protein eL20</fullName>
    </recommendedName>
    <alternativeName>
        <fullName evidence="2">50S ribosomal protein L18Ae</fullName>
    </alternativeName>
    <alternativeName>
        <fullName evidence="1">50S ribosomal protein L20e</fullName>
    </alternativeName>
    <alternativeName>
        <fullName evidence="1">50S ribosomal protein LX</fullName>
    </alternativeName>
</protein>
<gene>
    <name evidence="1" type="primary">rpl18a</name>
    <name evidence="1" type="synonym">rpl20e</name>
    <name evidence="1" type="synonym">rplX</name>
    <name type="ordered locus">MmarC7_1057</name>
</gene>
<dbReference type="EMBL" id="CP000745">
    <property type="protein sequence ID" value="ABR66123.1"/>
    <property type="molecule type" value="Genomic_DNA"/>
</dbReference>
<dbReference type="SMR" id="A6VI47"/>
<dbReference type="STRING" id="426368.MmarC7_1057"/>
<dbReference type="KEGG" id="mmz:MmarC7_1057"/>
<dbReference type="eggNOG" id="arCOG04175">
    <property type="taxonomic scope" value="Archaea"/>
</dbReference>
<dbReference type="HOGENOM" id="CLU_177460_0_1_2"/>
<dbReference type="OrthoDB" id="191241at2157"/>
<dbReference type="GO" id="GO:1990904">
    <property type="term" value="C:ribonucleoprotein complex"/>
    <property type="evidence" value="ECO:0007669"/>
    <property type="project" value="UniProtKB-KW"/>
</dbReference>
<dbReference type="GO" id="GO:0005840">
    <property type="term" value="C:ribosome"/>
    <property type="evidence" value="ECO:0007669"/>
    <property type="project" value="UniProtKB-KW"/>
</dbReference>
<dbReference type="GO" id="GO:0070180">
    <property type="term" value="F:large ribosomal subunit rRNA binding"/>
    <property type="evidence" value="ECO:0007669"/>
    <property type="project" value="UniProtKB-UniRule"/>
</dbReference>
<dbReference type="GO" id="GO:0003735">
    <property type="term" value="F:structural constituent of ribosome"/>
    <property type="evidence" value="ECO:0007669"/>
    <property type="project" value="InterPro"/>
</dbReference>
<dbReference type="GO" id="GO:0006412">
    <property type="term" value="P:translation"/>
    <property type="evidence" value="ECO:0007669"/>
    <property type="project" value="UniProtKB-UniRule"/>
</dbReference>
<dbReference type="Gene3D" id="3.10.20.10">
    <property type="match status" value="1"/>
</dbReference>
<dbReference type="HAMAP" id="MF_00273">
    <property type="entry name" value="Ribosomal_eL20"/>
    <property type="match status" value="1"/>
</dbReference>
<dbReference type="InterPro" id="IPR028877">
    <property type="entry name" value="Ribosomal_eL20"/>
</dbReference>
<dbReference type="InterPro" id="IPR023573">
    <property type="entry name" value="Ribosomal_eL20_dom"/>
</dbReference>
<dbReference type="NCBIfam" id="NF001981">
    <property type="entry name" value="PRK00773.1-1"/>
    <property type="match status" value="1"/>
</dbReference>
<dbReference type="Pfam" id="PF01775">
    <property type="entry name" value="Ribosomal_L18A"/>
    <property type="match status" value="1"/>
</dbReference>
<dbReference type="SUPFAM" id="SSF160374">
    <property type="entry name" value="RplX-like"/>
    <property type="match status" value="1"/>
</dbReference>
<reference key="1">
    <citation type="submission" date="2007-06" db="EMBL/GenBank/DDBJ databases">
        <title>Complete sequence of Methanococcus maripaludis C7.</title>
        <authorList>
            <consortium name="US DOE Joint Genome Institute"/>
            <person name="Copeland A."/>
            <person name="Lucas S."/>
            <person name="Lapidus A."/>
            <person name="Barry K."/>
            <person name="Glavina del Rio T."/>
            <person name="Dalin E."/>
            <person name="Tice H."/>
            <person name="Pitluck S."/>
            <person name="Clum A."/>
            <person name="Schmutz J."/>
            <person name="Larimer F."/>
            <person name="Land M."/>
            <person name="Hauser L."/>
            <person name="Kyrpides N."/>
            <person name="Anderson I."/>
            <person name="Sieprawska-Lupa M."/>
            <person name="Whitman W.B."/>
            <person name="Richardson P."/>
        </authorList>
    </citation>
    <scope>NUCLEOTIDE SEQUENCE [LARGE SCALE GENOMIC DNA]</scope>
    <source>
        <strain>C7 / ATCC BAA-1331</strain>
    </source>
</reference>
<organism>
    <name type="scientific">Methanococcus maripaludis (strain C7 / ATCC BAA-1331)</name>
    <dbReference type="NCBI Taxonomy" id="426368"/>
    <lineage>
        <taxon>Archaea</taxon>
        <taxon>Methanobacteriati</taxon>
        <taxon>Methanobacteriota</taxon>
        <taxon>Methanomada group</taxon>
        <taxon>Methanococci</taxon>
        <taxon>Methanococcales</taxon>
        <taxon>Methanococcaceae</taxon>
        <taxon>Methanococcus</taxon>
    </lineage>
</organism>
<sequence>MAKIIRIKGEILGKDEPMVFTKEYNVVKEDDALETMYSEMGSKHAVKRAYIKIVEVSEISEEDVQNPILKKTLEMY</sequence>
<evidence type="ECO:0000255" key="1">
    <source>
        <dbReference type="HAMAP-Rule" id="MF_00273"/>
    </source>
</evidence>
<evidence type="ECO:0000305" key="2"/>
<name>RL18A_METM7</name>
<feature type="chain" id="PRO_1000003668" description="Large ribosomal subunit protein eL20">
    <location>
        <begin position="1"/>
        <end position="76"/>
    </location>
</feature>